<protein>
    <recommendedName>
        <fullName evidence="8">Solute carrier family 2, facilitated glucose transporter member 1</fullName>
    </recommendedName>
    <alternativeName>
        <fullName evidence="7">Glucose transporter type 1</fullName>
        <shortName evidence="7">GLUT-1</shortName>
        <shortName evidence="7">GT1</shortName>
    </alternativeName>
</protein>
<feature type="chain" id="PRO_0000050344" description="Solute carrier family 2, facilitated glucose transporter member 1">
    <location>
        <begin position="1"/>
        <end position="490"/>
    </location>
</feature>
<feature type="topological domain" description="Cytoplasmic" evidence="1">
    <location>
        <begin position="1"/>
        <end position="10"/>
    </location>
</feature>
<feature type="transmembrane region" description="Helical; Name=1" evidence="1">
    <location>
        <begin position="11"/>
        <end position="32"/>
    </location>
</feature>
<feature type="topological domain" description="Extracellular" evidence="1">
    <location>
        <begin position="33"/>
        <end position="65"/>
    </location>
</feature>
<feature type="transmembrane region" description="Helical; Name=2" evidence="1">
    <location>
        <begin position="66"/>
        <end position="86"/>
    </location>
</feature>
<feature type="topological domain" description="Cytoplasmic" evidence="1">
    <location>
        <begin position="87"/>
        <end position="89"/>
    </location>
</feature>
<feature type="transmembrane region" description="Helical; Name=3" evidence="1">
    <location>
        <begin position="90"/>
        <end position="111"/>
    </location>
</feature>
<feature type="topological domain" description="Extracellular" evidence="1">
    <location>
        <begin position="112"/>
        <end position="119"/>
    </location>
</feature>
<feature type="transmembrane region" description="Helical; Name=4" evidence="1">
    <location>
        <begin position="120"/>
        <end position="143"/>
    </location>
</feature>
<feature type="topological domain" description="Cytoplasmic" evidence="1">
    <location>
        <begin position="144"/>
        <end position="154"/>
    </location>
</feature>
<feature type="transmembrane region" description="Helical; Name=5" evidence="1">
    <location>
        <begin position="155"/>
        <end position="175"/>
    </location>
</feature>
<feature type="topological domain" description="Extracellular" evidence="1">
    <location>
        <begin position="176"/>
        <end position="184"/>
    </location>
</feature>
<feature type="transmembrane region" description="Helical; Name=6" evidence="1">
    <location>
        <begin position="185"/>
        <end position="205"/>
    </location>
</feature>
<feature type="topological domain" description="Cytoplasmic" evidence="1">
    <location>
        <begin position="206"/>
        <end position="270"/>
    </location>
</feature>
<feature type="transmembrane region" description="Helical; Name=7" evidence="1">
    <location>
        <begin position="271"/>
        <end position="292"/>
    </location>
</feature>
<feature type="topological domain" description="Extracellular" evidence="1">
    <location>
        <begin position="293"/>
        <end position="305"/>
    </location>
</feature>
<feature type="transmembrane region" description="Helical; Name=8" evidence="1">
    <location>
        <begin position="306"/>
        <end position="327"/>
    </location>
</feature>
<feature type="topological domain" description="Cytoplasmic" evidence="1">
    <location>
        <begin position="328"/>
        <end position="333"/>
    </location>
</feature>
<feature type="transmembrane region" description="Helical; Name=9" evidence="1">
    <location>
        <begin position="334"/>
        <end position="354"/>
    </location>
</feature>
<feature type="topological domain" description="Extracellular" evidence="1">
    <location>
        <begin position="355"/>
        <end position="364"/>
    </location>
</feature>
<feature type="transmembrane region" description="Helical; Name=10" evidence="1">
    <location>
        <begin position="365"/>
        <end position="387"/>
    </location>
</feature>
<feature type="topological domain" description="Cytoplasmic" evidence="1">
    <location>
        <begin position="388"/>
        <end position="400"/>
    </location>
</feature>
<feature type="transmembrane region" description="Helical; Name=11" evidence="1">
    <location>
        <begin position="401"/>
        <end position="421"/>
    </location>
</feature>
<feature type="topological domain" description="Extracellular" evidence="1">
    <location>
        <begin position="422"/>
        <end position="428"/>
    </location>
</feature>
<feature type="transmembrane region" description="Helical; Name=12" evidence="1">
    <location>
        <begin position="429"/>
        <end position="449"/>
    </location>
</feature>
<feature type="topological domain" description="Cytoplasmic" evidence="1">
    <location>
        <begin position="450"/>
        <end position="490"/>
    </location>
</feature>
<feature type="region of interest" description="Disordered" evidence="5">
    <location>
        <begin position="470"/>
        <end position="490"/>
    </location>
</feature>
<feature type="binding site" evidence="2">
    <location>
        <position position="160"/>
    </location>
    <ligand>
        <name>D-glucose</name>
        <dbReference type="ChEBI" id="CHEBI:4167"/>
    </ligand>
</feature>
<feature type="binding site" evidence="2">
    <location>
        <begin position="281"/>
        <end position="282"/>
    </location>
    <ligand>
        <name>D-glucose</name>
        <dbReference type="ChEBI" id="CHEBI:4167"/>
    </ligand>
</feature>
<feature type="binding site" evidence="2">
    <location>
        <position position="287"/>
    </location>
    <ligand>
        <name>D-glucose</name>
        <dbReference type="ChEBI" id="CHEBI:4167"/>
    </ligand>
</feature>
<feature type="binding site" evidence="2">
    <location>
        <position position="316"/>
    </location>
    <ligand>
        <name>D-glucose</name>
        <dbReference type="ChEBI" id="CHEBI:4167"/>
    </ligand>
</feature>
<feature type="binding site" evidence="2">
    <location>
        <position position="379"/>
    </location>
    <ligand>
        <name>D-glucose</name>
        <dbReference type="ChEBI" id="CHEBI:4167"/>
    </ligand>
</feature>
<feature type="binding site" evidence="2">
    <location>
        <position position="387"/>
    </location>
    <ligand>
        <name>D-glucose</name>
        <dbReference type="ChEBI" id="CHEBI:4167"/>
    </ligand>
</feature>
<feature type="glycosylation site" description="N-linked (GlcNAc...) asparagine" evidence="4">
    <location>
        <position position="44"/>
    </location>
</feature>
<dbReference type="EMBL" id="L07300">
    <property type="protein sequence ID" value="AAB02037.1"/>
    <property type="molecule type" value="mRNA"/>
</dbReference>
<dbReference type="RefSeq" id="NP_990540.1">
    <property type="nucleotide sequence ID" value="NM_205209.1"/>
</dbReference>
<dbReference type="SMR" id="P46896"/>
<dbReference type="FunCoup" id="P46896">
    <property type="interactions" value="349"/>
</dbReference>
<dbReference type="STRING" id="9031.ENSGALP00000048387"/>
<dbReference type="GlyCosmos" id="P46896">
    <property type="glycosylation" value="1 site, No reported glycans"/>
</dbReference>
<dbReference type="GlyGen" id="P46896">
    <property type="glycosylation" value="1 site"/>
</dbReference>
<dbReference type="PaxDb" id="9031-ENSGALP00000007795"/>
<dbReference type="GeneID" id="396130"/>
<dbReference type="KEGG" id="gga:396130"/>
<dbReference type="CTD" id="6513"/>
<dbReference type="VEuPathDB" id="HostDB:geneid_396130"/>
<dbReference type="eggNOG" id="KOG0569">
    <property type="taxonomic scope" value="Eukaryota"/>
</dbReference>
<dbReference type="InParanoid" id="P46896"/>
<dbReference type="OrthoDB" id="4540492at2759"/>
<dbReference type="PhylomeDB" id="P46896"/>
<dbReference type="Reactome" id="R-GGA-352832">
    <property type="pathway name" value="Glucose transport"/>
</dbReference>
<dbReference type="PRO" id="PR:P46896"/>
<dbReference type="Proteomes" id="UP000000539">
    <property type="component" value="Unassembled WGS sequence"/>
</dbReference>
<dbReference type="GO" id="GO:0016324">
    <property type="term" value="C:apical plasma membrane"/>
    <property type="evidence" value="ECO:0000318"/>
    <property type="project" value="GO_Central"/>
</dbReference>
<dbReference type="GO" id="GO:0016323">
    <property type="term" value="C:basolateral plasma membrane"/>
    <property type="evidence" value="ECO:0000318"/>
    <property type="project" value="GO_Central"/>
</dbReference>
<dbReference type="GO" id="GO:0030864">
    <property type="term" value="C:cortical actin cytoskeleton"/>
    <property type="evidence" value="ECO:0000250"/>
    <property type="project" value="UniProtKB"/>
</dbReference>
<dbReference type="GO" id="GO:0001917">
    <property type="term" value="C:photoreceptor inner segment"/>
    <property type="evidence" value="ECO:0007669"/>
    <property type="project" value="UniProtKB-SubCell"/>
</dbReference>
<dbReference type="GO" id="GO:0005886">
    <property type="term" value="C:plasma membrane"/>
    <property type="evidence" value="ECO:0000314"/>
    <property type="project" value="UniProtKB"/>
</dbReference>
<dbReference type="GO" id="GO:0055056">
    <property type="term" value="F:D-glucose transmembrane transporter activity"/>
    <property type="evidence" value="ECO:0000250"/>
    <property type="project" value="UniProtKB"/>
</dbReference>
<dbReference type="GO" id="GO:0046323">
    <property type="term" value="P:D-glucose import"/>
    <property type="evidence" value="ECO:0000318"/>
    <property type="project" value="GO_Central"/>
</dbReference>
<dbReference type="GO" id="GO:1904659">
    <property type="term" value="P:D-glucose transmembrane transport"/>
    <property type="evidence" value="ECO:0000250"/>
    <property type="project" value="UniProtKB"/>
</dbReference>
<dbReference type="GO" id="GO:0070837">
    <property type="term" value="P:dehydroascorbic acid transport"/>
    <property type="evidence" value="ECO:0000318"/>
    <property type="project" value="GO_Central"/>
</dbReference>
<dbReference type="GO" id="GO:0045494">
    <property type="term" value="P:photoreceptor cell maintenance"/>
    <property type="evidence" value="ECO:0000315"/>
    <property type="project" value="UniProtKB"/>
</dbReference>
<dbReference type="GO" id="GO:0065003">
    <property type="term" value="P:protein-containing complex assembly"/>
    <property type="evidence" value="ECO:0000250"/>
    <property type="project" value="UniProtKB"/>
</dbReference>
<dbReference type="GO" id="GO:0071548">
    <property type="term" value="P:response to dexamethasone"/>
    <property type="evidence" value="ECO:0000314"/>
    <property type="project" value="AgBase"/>
</dbReference>
<dbReference type="GO" id="GO:0032868">
    <property type="term" value="P:response to insulin"/>
    <property type="evidence" value="ECO:0000314"/>
    <property type="project" value="AgBase"/>
</dbReference>
<dbReference type="CDD" id="cd17431">
    <property type="entry name" value="MFS_GLUT_Class1"/>
    <property type="match status" value="1"/>
</dbReference>
<dbReference type="FunFam" id="1.20.1250.20:FF:000040">
    <property type="entry name" value="Solute carrier family 2, facilitated glucose transporter member 1"/>
    <property type="match status" value="1"/>
</dbReference>
<dbReference type="Gene3D" id="1.20.1250.20">
    <property type="entry name" value="MFS general substrate transporter like domains"/>
    <property type="match status" value="1"/>
</dbReference>
<dbReference type="InterPro" id="IPR002439">
    <property type="entry name" value="Glu_transpt_1"/>
</dbReference>
<dbReference type="InterPro" id="IPR045263">
    <property type="entry name" value="GLUT"/>
</dbReference>
<dbReference type="InterPro" id="IPR020846">
    <property type="entry name" value="MFS_dom"/>
</dbReference>
<dbReference type="InterPro" id="IPR005828">
    <property type="entry name" value="MFS_sugar_transport-like"/>
</dbReference>
<dbReference type="InterPro" id="IPR036259">
    <property type="entry name" value="MFS_trans_sf"/>
</dbReference>
<dbReference type="InterPro" id="IPR003663">
    <property type="entry name" value="Sugar/inositol_transpt"/>
</dbReference>
<dbReference type="InterPro" id="IPR005829">
    <property type="entry name" value="Sugar_transporter_CS"/>
</dbReference>
<dbReference type="NCBIfam" id="TIGR00879">
    <property type="entry name" value="SP"/>
    <property type="match status" value="1"/>
</dbReference>
<dbReference type="PANTHER" id="PTHR23503">
    <property type="entry name" value="SOLUTE CARRIER FAMILY 2"/>
    <property type="match status" value="1"/>
</dbReference>
<dbReference type="PANTHER" id="PTHR23503:SF51">
    <property type="entry name" value="SOLUTE CARRIER FAMILY 2, FACILITATED GLUCOSE TRANSPORTER MEMBER 1"/>
    <property type="match status" value="1"/>
</dbReference>
<dbReference type="Pfam" id="PF00083">
    <property type="entry name" value="Sugar_tr"/>
    <property type="match status" value="1"/>
</dbReference>
<dbReference type="PRINTS" id="PR01190">
    <property type="entry name" value="GLUCTRSPORT1"/>
</dbReference>
<dbReference type="PRINTS" id="PR00171">
    <property type="entry name" value="SUGRTRNSPORT"/>
</dbReference>
<dbReference type="SUPFAM" id="SSF103473">
    <property type="entry name" value="MFS general substrate transporter"/>
    <property type="match status" value="1"/>
</dbReference>
<dbReference type="PROSITE" id="PS50850">
    <property type="entry name" value="MFS"/>
    <property type="match status" value="1"/>
</dbReference>
<dbReference type="PROSITE" id="PS00216">
    <property type="entry name" value="SUGAR_TRANSPORT_1"/>
    <property type="match status" value="1"/>
</dbReference>
<dbReference type="PROSITE" id="PS00217">
    <property type="entry name" value="SUGAR_TRANSPORT_2"/>
    <property type="match status" value="1"/>
</dbReference>
<reference key="1">
    <citation type="journal article" date="1995" name="Mol. Biol. Cell">
        <title>Characterization of the avian GLUT1 glucose transporter: differential regulation of GLUT1 and GLUT3 in chicken embryo fibroblasts.</title>
        <authorList>
            <person name="Wagstaff P."/>
            <person name="Kang H.Y."/>
            <person name="Mylott D."/>
            <person name="Robbins P.J."/>
            <person name="White M.K."/>
        </authorList>
    </citation>
    <scope>NUCLEOTIDE SEQUENCE [MRNA]</scope>
</reference>
<reference key="2">
    <citation type="journal article" date="2015" name="Cell">
        <title>Rod-derived cone viability factor promotes cone survival by stimulating aerobic glycolysis.</title>
        <authorList>
            <person name="Ait-Ali N."/>
            <person name="Fridlich R."/>
            <person name="Millet-Puel G."/>
            <person name="Clerin E."/>
            <person name="Delalande F."/>
            <person name="Jaillard C."/>
            <person name="Blond F."/>
            <person name="Perrocheau L."/>
            <person name="Reichman S."/>
            <person name="Byrne L.C."/>
            <person name="Olivier-Bandini A."/>
            <person name="Bellalou J."/>
            <person name="Moyse E."/>
            <person name="Bouillaud F."/>
            <person name="Nicol X."/>
            <person name="Dalkara D."/>
            <person name="van Dorsselaer A."/>
            <person name="Sahel J.A."/>
            <person name="Leveillard T."/>
        </authorList>
    </citation>
    <scope>FUNCTION</scope>
    <scope>SUBCELLULAR LOCATION</scope>
    <scope>INTERACTION WITH BSG</scope>
    <scope>TISSUE SPECIFICITY</scope>
</reference>
<name>GTR1_CHICK</name>
<accession>P46896</accession>
<keyword id="KW-1003">Cell membrane</keyword>
<keyword id="KW-0325">Glycoprotein</keyword>
<keyword id="KW-0472">Membrane</keyword>
<keyword id="KW-1185">Reference proteome</keyword>
<keyword id="KW-0762">Sugar transport</keyword>
<keyword id="KW-0812">Transmembrane</keyword>
<keyword id="KW-1133">Transmembrane helix</keyword>
<keyword id="KW-0813">Transport</keyword>
<organism>
    <name type="scientific">Gallus gallus</name>
    <name type="common">Chicken</name>
    <dbReference type="NCBI Taxonomy" id="9031"/>
    <lineage>
        <taxon>Eukaryota</taxon>
        <taxon>Metazoa</taxon>
        <taxon>Chordata</taxon>
        <taxon>Craniata</taxon>
        <taxon>Vertebrata</taxon>
        <taxon>Euteleostomi</taxon>
        <taxon>Archelosauria</taxon>
        <taxon>Archosauria</taxon>
        <taxon>Dinosauria</taxon>
        <taxon>Saurischia</taxon>
        <taxon>Theropoda</taxon>
        <taxon>Coelurosauria</taxon>
        <taxon>Aves</taxon>
        <taxon>Neognathae</taxon>
        <taxon>Galloanserae</taxon>
        <taxon>Galliformes</taxon>
        <taxon>Phasianidae</taxon>
        <taxon>Phasianinae</taxon>
        <taxon>Gallus</taxon>
    </lineage>
</organism>
<evidence type="ECO:0000250" key="1">
    <source>
        <dbReference type="UniProtKB" id="P11166"/>
    </source>
</evidence>
<evidence type="ECO:0000250" key="2">
    <source>
        <dbReference type="UniProtKB" id="P11169"/>
    </source>
</evidence>
<evidence type="ECO:0000250" key="3">
    <source>
        <dbReference type="UniProtKB" id="P17809"/>
    </source>
</evidence>
<evidence type="ECO:0000255" key="4"/>
<evidence type="ECO:0000256" key="5">
    <source>
        <dbReference type="SAM" id="MobiDB-lite"/>
    </source>
</evidence>
<evidence type="ECO:0000269" key="6">
    <source>
    </source>
</evidence>
<evidence type="ECO:0000303" key="7">
    <source>
    </source>
</evidence>
<evidence type="ECO:0000305" key="8"/>
<proteinExistence type="evidence at protein level"/>
<gene>
    <name evidence="1" type="primary">SLC2A1</name>
    <name evidence="7" type="synonym">GLUT1</name>
</gene>
<sequence>MESGSKMTARLMLAVGGAVLGSLQFGYNTGVINRPQKVIEDFYNHTWLYRYEEPISPATLTTLWSLSVAIFSVGGMIGSFSVGLFVNRFGRRNSMLMSNILAFLAAVLMGFSKMALSFEMLILGRFIIGLYSGLTTGFVPMYVGEVSPTALRGALGTFHQLGIVLGILIAQVFGLDLIMGNDSLWPLLLGFIFVPALLQCIILPFAPESPRFLLINRNEENKAKSVLKKLRGTTDVSSDLQEMKEESRQMMREKKVTIMELFRSPMYRQPILIAIVLQLSQQLSGINAVFYYSTSIFEKSGVEQPVYATIGSGVVNTAFTVVSLFVVERAGRRTLHLIGLAGMAGCAILMTIALTLLDQMPWMSYLSIVAIFGFVAFFEIGPGPIPWFIVAELFSQGPRPAAFAVAGLSNWTSNFIVGMGFQYIAQLCGSYVFIIFTVLLVLFFIFTYFKVPETKGRTFDEIAYRFRQGGASQSDKTPDEFHSLGADSQV</sequence>
<comment type="function">
    <text evidence="1 3 6">Facilitative glucose transporter, which is responsible for constitutive or basal glucose uptake. Has a very broad substrate specificity; can transport a wide range of aldoses including both pentoses and hexoses. Most important energy carrier of the brain: present at the blood-brain barrier and assures the energy-independent, facilitative transport of glucose into the brain (By similarity). In association with BSG and NXNL1, promotes retinal cone survival by increasing glucose uptake into photoreceptors (PubMed:25957687). Required for mesendoderm differentiation (By similarity).</text>
</comment>
<comment type="catalytic activity">
    <reaction evidence="1">
        <text>D-glucose(out) = D-glucose(in)</text>
        <dbReference type="Rhea" id="RHEA:60376"/>
        <dbReference type="ChEBI" id="CHEBI:4167"/>
    </reaction>
</comment>
<comment type="subunit">
    <text evidence="6">Interacts with isoform 1 of BSG.</text>
</comment>
<comment type="subcellular location">
    <subcellularLocation>
        <location evidence="6">Cell membrane</location>
        <topology evidence="4">Multi-pass membrane protein</topology>
    </subcellularLocation>
    <subcellularLocation>
        <location evidence="3">Photoreceptor inner segment</location>
    </subcellularLocation>
</comment>
<comment type="tissue specificity">
    <text evidence="6">Retinal cones (at protein level).</text>
</comment>
<comment type="similarity">
    <text evidence="8">Belongs to the major facilitator superfamily. Sugar transporter (TC 2.A.1.1) family. Glucose transporter subfamily.</text>
</comment>